<feature type="chain" id="PRO_0000387743" description="Acetaldehyde dehydrogenase 1/2">
    <location>
        <begin position="1"/>
        <end position="314"/>
    </location>
</feature>
<feature type="active site" description="Acyl-thioester intermediate" evidence="1">
    <location>
        <position position="130"/>
    </location>
</feature>
<feature type="binding site" evidence="1">
    <location>
        <begin position="12"/>
        <end position="15"/>
    </location>
    <ligand>
        <name>NAD(+)</name>
        <dbReference type="ChEBI" id="CHEBI:57540"/>
    </ligand>
</feature>
<feature type="binding site" evidence="1">
    <location>
        <begin position="161"/>
        <end position="169"/>
    </location>
    <ligand>
        <name>NAD(+)</name>
        <dbReference type="ChEBI" id="CHEBI:57540"/>
    </ligand>
</feature>
<feature type="binding site" evidence="1">
    <location>
        <position position="288"/>
    </location>
    <ligand>
        <name>NAD(+)</name>
        <dbReference type="ChEBI" id="CHEBI:57540"/>
    </ligand>
</feature>
<proteinExistence type="inferred from homology"/>
<accession>A5V6T7</accession>
<protein>
    <recommendedName>
        <fullName evidence="1">Acetaldehyde dehydrogenase 1/2</fullName>
        <ecNumber evidence="1">1.2.1.10</ecNumber>
    </recommendedName>
    <alternativeName>
        <fullName evidence="1">Acetaldehyde dehydrogenase [acetylating] 1/2</fullName>
    </alternativeName>
</protein>
<evidence type="ECO:0000255" key="1">
    <source>
        <dbReference type="HAMAP-Rule" id="MF_01657"/>
    </source>
</evidence>
<keyword id="KW-0058">Aromatic hydrocarbons catabolism</keyword>
<keyword id="KW-0520">NAD</keyword>
<keyword id="KW-0560">Oxidoreductase</keyword>
<keyword id="KW-1185">Reference proteome</keyword>
<organism>
    <name type="scientific">Rhizorhabdus wittichii (strain DSM 6014 / CCUG 31198 / JCM 15750 / NBRC 105917 / EY 4224 / RW1)</name>
    <name type="common">Sphingomonas wittichii</name>
    <dbReference type="NCBI Taxonomy" id="392499"/>
    <lineage>
        <taxon>Bacteria</taxon>
        <taxon>Pseudomonadati</taxon>
        <taxon>Pseudomonadota</taxon>
        <taxon>Alphaproteobacteria</taxon>
        <taxon>Sphingomonadales</taxon>
        <taxon>Sphingomonadaceae</taxon>
        <taxon>Rhizorhabdus</taxon>
    </lineage>
</organism>
<comment type="catalytic activity">
    <reaction evidence="1">
        <text>acetaldehyde + NAD(+) + CoA = acetyl-CoA + NADH + H(+)</text>
        <dbReference type="Rhea" id="RHEA:23288"/>
        <dbReference type="ChEBI" id="CHEBI:15343"/>
        <dbReference type="ChEBI" id="CHEBI:15378"/>
        <dbReference type="ChEBI" id="CHEBI:57287"/>
        <dbReference type="ChEBI" id="CHEBI:57288"/>
        <dbReference type="ChEBI" id="CHEBI:57540"/>
        <dbReference type="ChEBI" id="CHEBI:57945"/>
        <dbReference type="EC" id="1.2.1.10"/>
    </reaction>
</comment>
<comment type="similarity">
    <text evidence="1">Belongs to the acetaldehyde dehydrogenase family.</text>
</comment>
<dbReference type="EC" id="1.2.1.10" evidence="1"/>
<dbReference type="EMBL" id="CP000699">
    <property type="protein sequence ID" value="ABQ68003.1"/>
    <property type="molecule type" value="Genomic_DNA"/>
</dbReference>
<dbReference type="EMBL" id="CP000699">
    <property type="protein sequence ID" value="ABQ68471.1"/>
    <property type="molecule type" value="Genomic_DNA"/>
</dbReference>
<dbReference type="SMR" id="A5V6T7"/>
<dbReference type="STRING" id="392499.Swit_1640"/>
<dbReference type="PaxDb" id="392499-Swit_1640"/>
<dbReference type="KEGG" id="swi:Swit_1640"/>
<dbReference type="KEGG" id="swi:Swit_2112"/>
<dbReference type="eggNOG" id="COG4569">
    <property type="taxonomic scope" value="Bacteria"/>
</dbReference>
<dbReference type="HOGENOM" id="CLU_062208_0_0_5"/>
<dbReference type="OrthoDB" id="9786743at2"/>
<dbReference type="Proteomes" id="UP000001989">
    <property type="component" value="Chromosome"/>
</dbReference>
<dbReference type="GO" id="GO:0008774">
    <property type="term" value="F:acetaldehyde dehydrogenase (acetylating) activity"/>
    <property type="evidence" value="ECO:0007669"/>
    <property type="project" value="UniProtKB-UniRule"/>
</dbReference>
<dbReference type="GO" id="GO:0051287">
    <property type="term" value="F:NAD binding"/>
    <property type="evidence" value="ECO:0007669"/>
    <property type="project" value="UniProtKB-UniRule"/>
</dbReference>
<dbReference type="GO" id="GO:0009056">
    <property type="term" value="P:catabolic process"/>
    <property type="evidence" value="ECO:0007669"/>
    <property type="project" value="UniProtKB-KW"/>
</dbReference>
<dbReference type="CDD" id="cd23933">
    <property type="entry name" value="ALDH_C"/>
    <property type="match status" value="1"/>
</dbReference>
<dbReference type="Gene3D" id="3.30.360.10">
    <property type="entry name" value="Dihydrodipicolinate Reductase, domain 2"/>
    <property type="match status" value="1"/>
</dbReference>
<dbReference type="Gene3D" id="3.40.50.720">
    <property type="entry name" value="NAD(P)-binding Rossmann-like Domain"/>
    <property type="match status" value="1"/>
</dbReference>
<dbReference type="HAMAP" id="MF_01657">
    <property type="entry name" value="Ac_ald_DH_ac"/>
    <property type="match status" value="1"/>
</dbReference>
<dbReference type="InterPro" id="IPR003361">
    <property type="entry name" value="Acetaldehyde_dehydrogenase"/>
</dbReference>
<dbReference type="InterPro" id="IPR015426">
    <property type="entry name" value="Acetylaldehyde_DH_C"/>
</dbReference>
<dbReference type="InterPro" id="IPR036291">
    <property type="entry name" value="NAD(P)-bd_dom_sf"/>
</dbReference>
<dbReference type="InterPro" id="IPR000534">
    <property type="entry name" value="Semialdehyde_DH_NAD-bd"/>
</dbReference>
<dbReference type="NCBIfam" id="TIGR03215">
    <property type="entry name" value="ac_ald_DH_ac"/>
    <property type="match status" value="1"/>
</dbReference>
<dbReference type="NCBIfam" id="NF006157">
    <property type="entry name" value="PRK08300.1"/>
    <property type="match status" value="1"/>
</dbReference>
<dbReference type="Pfam" id="PF09290">
    <property type="entry name" value="AcetDehyd-dimer"/>
    <property type="match status" value="1"/>
</dbReference>
<dbReference type="Pfam" id="PF01118">
    <property type="entry name" value="Semialdhyde_dh"/>
    <property type="match status" value="1"/>
</dbReference>
<dbReference type="PIRSF" id="PIRSF015689">
    <property type="entry name" value="Actaldh_dh_actl"/>
    <property type="match status" value="1"/>
</dbReference>
<dbReference type="SMART" id="SM00859">
    <property type="entry name" value="Semialdhyde_dh"/>
    <property type="match status" value="1"/>
</dbReference>
<dbReference type="SUPFAM" id="SSF55347">
    <property type="entry name" value="Glyceraldehyde-3-phosphate dehydrogenase-like, C-terminal domain"/>
    <property type="match status" value="1"/>
</dbReference>
<dbReference type="SUPFAM" id="SSF51735">
    <property type="entry name" value="NAD(P)-binding Rossmann-fold domains"/>
    <property type="match status" value="1"/>
</dbReference>
<gene>
    <name type="ordered locus">Swit_1640</name>
</gene>
<gene>
    <name type="ordered locus">Swit_2112</name>
</gene>
<reference key="1">
    <citation type="journal article" date="2010" name="J. Bacteriol.">
        <title>Genome sequence of the dioxin-mineralizing bacterium Sphingomonas wittichii RW1.</title>
        <authorList>
            <person name="Miller T.R."/>
            <person name="Delcher A.L."/>
            <person name="Salzberg S.L."/>
            <person name="Saunders E."/>
            <person name="Detter J.C."/>
            <person name="Halden R.U."/>
        </authorList>
    </citation>
    <scope>NUCLEOTIDE SEQUENCE [LARGE SCALE GENOMIC DNA]</scope>
    <source>
        <strain>DSM 6014 / CCUG 31198 / JCM 15750 / NBRC 105917 / EY 4224 / RW1</strain>
    </source>
</reference>
<sequence length="314" mass="33111">MSQKVKAAIIGSGNIGTDLMIKMIKYPQNMELAAVVGIDPASEGLAMARERGIATTHEGIEGLKKLPDYAEIGVVFDATSAYAHKVHDEALRADGKLVVDLTPAAIGPFTIPPVNMDEHLDATNVNMVTCGGQATIPIVAAVSQVATVHYAEIVASVSSRSAGPGTRANIDEFTRTTASAIEKVGGAAQGKAIIILNPAEPPMIMRDTVFTLSEGADEEAIRASVAAMVAKVQAYVPGYRLKQEVQFERFGDNNKLKIPGRGEFTGIKTSVFLEVEGAGDYLPSYSGNLDIMTAAAKATGELLAQRIIERRAAA</sequence>
<name>ACDH1_RHIWR</name>